<reference key="1">
    <citation type="journal article" date="2007" name="J. Bacteriol.">
        <title>Genome-wide transcriptional changes in Streptococcus gordonii in response to competence signaling peptide.</title>
        <authorList>
            <person name="Vickerman M.M."/>
            <person name="Iobst S."/>
            <person name="Jesionowski A.M."/>
            <person name="Gill S.R."/>
        </authorList>
    </citation>
    <scope>NUCLEOTIDE SEQUENCE [LARGE SCALE GENOMIC DNA]</scope>
    <source>
        <strain>Challis / ATCC 35105 / BCRC 15272 / CH1 / DL1 / V288</strain>
    </source>
</reference>
<feature type="chain" id="PRO_1000088144" description="Bifunctional protein GlmU">
    <location>
        <begin position="1"/>
        <end position="459"/>
    </location>
</feature>
<feature type="region of interest" description="Pyrophosphorylase" evidence="1">
    <location>
        <begin position="1"/>
        <end position="229"/>
    </location>
</feature>
<feature type="region of interest" description="Linker" evidence="1">
    <location>
        <begin position="230"/>
        <end position="250"/>
    </location>
</feature>
<feature type="region of interest" description="N-acetyltransferase" evidence="1">
    <location>
        <begin position="251"/>
        <end position="459"/>
    </location>
</feature>
<feature type="active site" description="Proton acceptor" evidence="1">
    <location>
        <position position="362"/>
    </location>
</feature>
<feature type="binding site" evidence="1">
    <location>
        <begin position="8"/>
        <end position="11"/>
    </location>
    <ligand>
        <name>UDP-N-acetyl-alpha-D-glucosamine</name>
        <dbReference type="ChEBI" id="CHEBI:57705"/>
    </ligand>
</feature>
<feature type="binding site" evidence="1">
    <location>
        <position position="22"/>
    </location>
    <ligand>
        <name>UDP-N-acetyl-alpha-D-glucosamine</name>
        <dbReference type="ChEBI" id="CHEBI:57705"/>
    </ligand>
</feature>
<feature type="binding site" evidence="1">
    <location>
        <position position="72"/>
    </location>
    <ligand>
        <name>UDP-N-acetyl-alpha-D-glucosamine</name>
        <dbReference type="ChEBI" id="CHEBI:57705"/>
    </ligand>
</feature>
<feature type="binding site" evidence="1">
    <location>
        <begin position="77"/>
        <end position="78"/>
    </location>
    <ligand>
        <name>UDP-N-acetyl-alpha-D-glucosamine</name>
        <dbReference type="ChEBI" id="CHEBI:57705"/>
    </ligand>
</feature>
<feature type="binding site" evidence="1">
    <location>
        <position position="102"/>
    </location>
    <ligand>
        <name>Mg(2+)</name>
        <dbReference type="ChEBI" id="CHEBI:18420"/>
    </ligand>
</feature>
<feature type="binding site" evidence="1">
    <location>
        <position position="139"/>
    </location>
    <ligand>
        <name>UDP-N-acetyl-alpha-D-glucosamine</name>
        <dbReference type="ChEBI" id="CHEBI:57705"/>
    </ligand>
</feature>
<feature type="binding site" evidence="1">
    <location>
        <position position="154"/>
    </location>
    <ligand>
        <name>UDP-N-acetyl-alpha-D-glucosamine</name>
        <dbReference type="ChEBI" id="CHEBI:57705"/>
    </ligand>
</feature>
<feature type="binding site" evidence="1">
    <location>
        <position position="169"/>
    </location>
    <ligand>
        <name>UDP-N-acetyl-alpha-D-glucosamine</name>
        <dbReference type="ChEBI" id="CHEBI:57705"/>
    </ligand>
</feature>
<feature type="binding site" evidence="1">
    <location>
        <position position="227"/>
    </location>
    <ligand>
        <name>Mg(2+)</name>
        <dbReference type="ChEBI" id="CHEBI:18420"/>
    </ligand>
</feature>
<feature type="binding site" evidence="1">
    <location>
        <position position="227"/>
    </location>
    <ligand>
        <name>UDP-N-acetyl-alpha-D-glucosamine</name>
        <dbReference type="ChEBI" id="CHEBI:57705"/>
    </ligand>
</feature>
<feature type="binding site" evidence="1">
    <location>
        <position position="332"/>
    </location>
    <ligand>
        <name>UDP-N-acetyl-alpha-D-glucosamine</name>
        <dbReference type="ChEBI" id="CHEBI:57705"/>
    </ligand>
</feature>
<feature type="binding site" evidence="1">
    <location>
        <position position="350"/>
    </location>
    <ligand>
        <name>UDP-N-acetyl-alpha-D-glucosamine</name>
        <dbReference type="ChEBI" id="CHEBI:57705"/>
    </ligand>
</feature>
<feature type="binding site" evidence="1">
    <location>
        <position position="365"/>
    </location>
    <ligand>
        <name>UDP-N-acetyl-alpha-D-glucosamine</name>
        <dbReference type="ChEBI" id="CHEBI:57705"/>
    </ligand>
</feature>
<feature type="binding site" evidence="1">
    <location>
        <position position="376"/>
    </location>
    <ligand>
        <name>UDP-N-acetyl-alpha-D-glucosamine</name>
        <dbReference type="ChEBI" id="CHEBI:57705"/>
    </ligand>
</feature>
<feature type="binding site" evidence="1">
    <location>
        <position position="379"/>
    </location>
    <ligand>
        <name>acetyl-CoA</name>
        <dbReference type="ChEBI" id="CHEBI:57288"/>
    </ligand>
</feature>
<feature type="binding site" evidence="1">
    <location>
        <begin position="385"/>
        <end position="386"/>
    </location>
    <ligand>
        <name>acetyl-CoA</name>
        <dbReference type="ChEBI" id="CHEBI:57288"/>
    </ligand>
</feature>
<feature type="binding site" evidence="1">
    <location>
        <position position="404"/>
    </location>
    <ligand>
        <name>acetyl-CoA</name>
        <dbReference type="ChEBI" id="CHEBI:57288"/>
    </ligand>
</feature>
<feature type="binding site" evidence="1">
    <location>
        <position position="422"/>
    </location>
    <ligand>
        <name>acetyl-CoA</name>
        <dbReference type="ChEBI" id="CHEBI:57288"/>
    </ligand>
</feature>
<feature type="binding site" evidence="1">
    <location>
        <position position="439"/>
    </location>
    <ligand>
        <name>acetyl-CoA</name>
        <dbReference type="ChEBI" id="CHEBI:57288"/>
    </ligand>
</feature>
<proteinExistence type="inferred from homology"/>
<name>GLMU_STRGC</name>
<comment type="function">
    <text evidence="1">Catalyzes the last two sequential reactions in the de novo biosynthetic pathway for UDP-N-acetylglucosamine (UDP-GlcNAc). The C-terminal domain catalyzes the transfer of acetyl group from acetyl coenzyme A to glucosamine-1-phosphate (GlcN-1-P) to produce N-acetylglucosamine-1-phosphate (GlcNAc-1-P), which is converted into UDP-GlcNAc by the transfer of uridine 5-monophosphate (from uridine 5-triphosphate), a reaction catalyzed by the N-terminal domain.</text>
</comment>
<comment type="catalytic activity">
    <reaction evidence="1">
        <text>alpha-D-glucosamine 1-phosphate + acetyl-CoA = N-acetyl-alpha-D-glucosamine 1-phosphate + CoA + H(+)</text>
        <dbReference type="Rhea" id="RHEA:13725"/>
        <dbReference type="ChEBI" id="CHEBI:15378"/>
        <dbReference type="ChEBI" id="CHEBI:57287"/>
        <dbReference type="ChEBI" id="CHEBI:57288"/>
        <dbReference type="ChEBI" id="CHEBI:57776"/>
        <dbReference type="ChEBI" id="CHEBI:58516"/>
        <dbReference type="EC" id="2.3.1.157"/>
    </reaction>
</comment>
<comment type="catalytic activity">
    <reaction evidence="1">
        <text>N-acetyl-alpha-D-glucosamine 1-phosphate + UTP + H(+) = UDP-N-acetyl-alpha-D-glucosamine + diphosphate</text>
        <dbReference type="Rhea" id="RHEA:13509"/>
        <dbReference type="ChEBI" id="CHEBI:15378"/>
        <dbReference type="ChEBI" id="CHEBI:33019"/>
        <dbReference type="ChEBI" id="CHEBI:46398"/>
        <dbReference type="ChEBI" id="CHEBI:57705"/>
        <dbReference type="ChEBI" id="CHEBI:57776"/>
        <dbReference type="EC" id="2.7.7.23"/>
    </reaction>
</comment>
<comment type="cofactor">
    <cofactor evidence="1">
        <name>Mg(2+)</name>
        <dbReference type="ChEBI" id="CHEBI:18420"/>
    </cofactor>
    <text evidence="1">Binds 1 Mg(2+) ion per subunit.</text>
</comment>
<comment type="pathway">
    <text evidence="1">Nucleotide-sugar biosynthesis; UDP-N-acetyl-alpha-D-glucosamine biosynthesis; N-acetyl-alpha-D-glucosamine 1-phosphate from alpha-D-glucosamine 6-phosphate (route II): step 2/2.</text>
</comment>
<comment type="pathway">
    <text evidence="1">Nucleotide-sugar biosynthesis; UDP-N-acetyl-alpha-D-glucosamine biosynthesis; UDP-N-acetyl-alpha-D-glucosamine from N-acetyl-alpha-D-glucosamine 1-phosphate: step 1/1.</text>
</comment>
<comment type="pathway">
    <text evidence="1">Bacterial outer membrane biogenesis; LPS lipid A biosynthesis.</text>
</comment>
<comment type="subunit">
    <text evidence="1">Homotrimer.</text>
</comment>
<comment type="subcellular location">
    <subcellularLocation>
        <location evidence="1">Cytoplasm</location>
    </subcellularLocation>
</comment>
<comment type="similarity">
    <text evidence="1">In the N-terminal section; belongs to the N-acetylglucosamine-1-phosphate uridyltransferase family.</text>
</comment>
<comment type="similarity">
    <text evidence="1">In the C-terminal section; belongs to the transferase hexapeptide repeat family.</text>
</comment>
<evidence type="ECO:0000255" key="1">
    <source>
        <dbReference type="HAMAP-Rule" id="MF_01631"/>
    </source>
</evidence>
<gene>
    <name evidence="1" type="primary">glmU</name>
    <name type="ordered locus">SGO_1469</name>
</gene>
<keyword id="KW-0012">Acyltransferase</keyword>
<keyword id="KW-0133">Cell shape</keyword>
<keyword id="KW-0961">Cell wall biogenesis/degradation</keyword>
<keyword id="KW-0963">Cytoplasm</keyword>
<keyword id="KW-0460">Magnesium</keyword>
<keyword id="KW-0479">Metal-binding</keyword>
<keyword id="KW-0511">Multifunctional enzyme</keyword>
<keyword id="KW-0548">Nucleotidyltransferase</keyword>
<keyword id="KW-0573">Peptidoglycan synthesis</keyword>
<keyword id="KW-1185">Reference proteome</keyword>
<keyword id="KW-0677">Repeat</keyword>
<keyword id="KW-0808">Transferase</keyword>
<organism>
    <name type="scientific">Streptococcus gordonii (strain Challis / ATCC 35105 / BCRC 15272 / CH1 / DL1 / V288)</name>
    <dbReference type="NCBI Taxonomy" id="467705"/>
    <lineage>
        <taxon>Bacteria</taxon>
        <taxon>Bacillati</taxon>
        <taxon>Bacillota</taxon>
        <taxon>Bacilli</taxon>
        <taxon>Lactobacillales</taxon>
        <taxon>Streptococcaceae</taxon>
        <taxon>Streptococcus</taxon>
    </lineage>
</organism>
<accession>A8AY88</accession>
<dbReference type="EC" id="2.7.7.23" evidence="1"/>
<dbReference type="EC" id="2.3.1.157" evidence="1"/>
<dbReference type="EMBL" id="CP000725">
    <property type="protein sequence ID" value="ABV10062.1"/>
    <property type="molecule type" value="Genomic_DNA"/>
</dbReference>
<dbReference type="RefSeq" id="WP_012130546.1">
    <property type="nucleotide sequence ID" value="NC_009785.1"/>
</dbReference>
<dbReference type="SMR" id="A8AY88"/>
<dbReference type="STRING" id="467705.SGO_1469"/>
<dbReference type="KEGG" id="sgo:SGO_1469"/>
<dbReference type="eggNOG" id="COG1207">
    <property type="taxonomic scope" value="Bacteria"/>
</dbReference>
<dbReference type="HOGENOM" id="CLU_029499_15_2_9"/>
<dbReference type="UniPathway" id="UPA00113">
    <property type="reaction ID" value="UER00532"/>
</dbReference>
<dbReference type="UniPathway" id="UPA00113">
    <property type="reaction ID" value="UER00533"/>
</dbReference>
<dbReference type="UniPathway" id="UPA00973"/>
<dbReference type="Proteomes" id="UP000001131">
    <property type="component" value="Chromosome"/>
</dbReference>
<dbReference type="GO" id="GO:0005737">
    <property type="term" value="C:cytoplasm"/>
    <property type="evidence" value="ECO:0007669"/>
    <property type="project" value="UniProtKB-SubCell"/>
</dbReference>
<dbReference type="GO" id="GO:0016020">
    <property type="term" value="C:membrane"/>
    <property type="evidence" value="ECO:0007669"/>
    <property type="project" value="GOC"/>
</dbReference>
<dbReference type="GO" id="GO:0019134">
    <property type="term" value="F:glucosamine-1-phosphate N-acetyltransferase activity"/>
    <property type="evidence" value="ECO:0007669"/>
    <property type="project" value="UniProtKB-UniRule"/>
</dbReference>
<dbReference type="GO" id="GO:0000287">
    <property type="term" value="F:magnesium ion binding"/>
    <property type="evidence" value="ECO:0007669"/>
    <property type="project" value="UniProtKB-UniRule"/>
</dbReference>
<dbReference type="GO" id="GO:0003977">
    <property type="term" value="F:UDP-N-acetylglucosamine diphosphorylase activity"/>
    <property type="evidence" value="ECO:0007669"/>
    <property type="project" value="UniProtKB-UniRule"/>
</dbReference>
<dbReference type="GO" id="GO:0000902">
    <property type="term" value="P:cell morphogenesis"/>
    <property type="evidence" value="ECO:0007669"/>
    <property type="project" value="UniProtKB-UniRule"/>
</dbReference>
<dbReference type="GO" id="GO:0071555">
    <property type="term" value="P:cell wall organization"/>
    <property type="evidence" value="ECO:0007669"/>
    <property type="project" value="UniProtKB-KW"/>
</dbReference>
<dbReference type="GO" id="GO:0009245">
    <property type="term" value="P:lipid A biosynthetic process"/>
    <property type="evidence" value="ECO:0007669"/>
    <property type="project" value="UniProtKB-UniRule"/>
</dbReference>
<dbReference type="GO" id="GO:0009252">
    <property type="term" value="P:peptidoglycan biosynthetic process"/>
    <property type="evidence" value="ECO:0007669"/>
    <property type="project" value="UniProtKB-UniRule"/>
</dbReference>
<dbReference type="GO" id="GO:0008360">
    <property type="term" value="P:regulation of cell shape"/>
    <property type="evidence" value="ECO:0007669"/>
    <property type="project" value="UniProtKB-KW"/>
</dbReference>
<dbReference type="GO" id="GO:0006048">
    <property type="term" value="P:UDP-N-acetylglucosamine biosynthetic process"/>
    <property type="evidence" value="ECO:0007669"/>
    <property type="project" value="UniProtKB-UniPathway"/>
</dbReference>
<dbReference type="CDD" id="cd02540">
    <property type="entry name" value="GT2_GlmU_N_bac"/>
    <property type="match status" value="1"/>
</dbReference>
<dbReference type="CDD" id="cd03353">
    <property type="entry name" value="LbH_GlmU_C"/>
    <property type="match status" value="1"/>
</dbReference>
<dbReference type="Gene3D" id="2.160.10.10">
    <property type="entry name" value="Hexapeptide repeat proteins"/>
    <property type="match status" value="1"/>
</dbReference>
<dbReference type="Gene3D" id="3.90.550.10">
    <property type="entry name" value="Spore Coat Polysaccharide Biosynthesis Protein SpsA, Chain A"/>
    <property type="match status" value="1"/>
</dbReference>
<dbReference type="HAMAP" id="MF_01631">
    <property type="entry name" value="GlmU"/>
    <property type="match status" value="1"/>
</dbReference>
<dbReference type="InterPro" id="IPR005882">
    <property type="entry name" value="Bifunctional_GlmU"/>
</dbReference>
<dbReference type="InterPro" id="IPR050065">
    <property type="entry name" value="GlmU-like"/>
</dbReference>
<dbReference type="InterPro" id="IPR038009">
    <property type="entry name" value="GlmU_C_LbH"/>
</dbReference>
<dbReference type="InterPro" id="IPR001451">
    <property type="entry name" value="Hexapep"/>
</dbReference>
<dbReference type="InterPro" id="IPR018357">
    <property type="entry name" value="Hexapep_transf_CS"/>
</dbReference>
<dbReference type="InterPro" id="IPR005835">
    <property type="entry name" value="NTP_transferase_dom"/>
</dbReference>
<dbReference type="InterPro" id="IPR029044">
    <property type="entry name" value="Nucleotide-diphossugar_trans"/>
</dbReference>
<dbReference type="InterPro" id="IPR011004">
    <property type="entry name" value="Trimer_LpxA-like_sf"/>
</dbReference>
<dbReference type="NCBIfam" id="TIGR01173">
    <property type="entry name" value="glmU"/>
    <property type="match status" value="1"/>
</dbReference>
<dbReference type="NCBIfam" id="NF010934">
    <property type="entry name" value="PRK14354.1"/>
    <property type="match status" value="1"/>
</dbReference>
<dbReference type="PANTHER" id="PTHR43584:SF3">
    <property type="entry name" value="BIFUNCTIONAL PROTEIN GLMU"/>
    <property type="match status" value="1"/>
</dbReference>
<dbReference type="PANTHER" id="PTHR43584">
    <property type="entry name" value="NUCLEOTIDYL TRANSFERASE"/>
    <property type="match status" value="1"/>
</dbReference>
<dbReference type="Pfam" id="PF14602">
    <property type="entry name" value="Hexapep_2"/>
    <property type="match status" value="1"/>
</dbReference>
<dbReference type="Pfam" id="PF00483">
    <property type="entry name" value="NTP_transferase"/>
    <property type="match status" value="1"/>
</dbReference>
<dbReference type="SUPFAM" id="SSF53448">
    <property type="entry name" value="Nucleotide-diphospho-sugar transferases"/>
    <property type="match status" value="1"/>
</dbReference>
<dbReference type="SUPFAM" id="SSF51161">
    <property type="entry name" value="Trimeric LpxA-like enzymes"/>
    <property type="match status" value="1"/>
</dbReference>
<dbReference type="PROSITE" id="PS00101">
    <property type="entry name" value="HEXAPEP_TRANSFERASES"/>
    <property type="match status" value="1"/>
</dbReference>
<sequence length="459" mass="49550">MTNYAIILAAGKGTRMKSDLPKVLHKVAGISMLEHVFRSVNAINPEKTVTVIGHKAELVEQVLAGQTEFVRQTEQLGTGHAVMMAEPVLENLTGQTLVIAGDTPLITGESLKNLIDFHINHKNVATILTAEADNPFGYGRIVRNQHGEVLKIVEQKDASDFEQQIKEINTGTYVFDNARLFEALKNINTNNAQGEYYITDVIGIFRENGEKVGAYTLKDFDESLGVNDRVALATAESVMRRRINQKHMVNGVSFVNPDATYIDVDVEIAPEVQVEANVTLKGQTKIGAETILTNGTYIVDSVIGERTVITNSMIEESSVADGVTVGPYAHIRPGSSLAKDVHVGNFVEVKGSSIGENTKAGHLTYIGNSEVGANVNFGAGTITVNYDGQKKYKTIIGANVFVGSNSTIIAPVELGDNSLVGAGSTITKDVPADAIALGRGRQINKEDYAKRLPHHPQNK</sequence>
<protein>
    <recommendedName>
        <fullName evidence="1">Bifunctional protein GlmU</fullName>
    </recommendedName>
    <domain>
        <recommendedName>
            <fullName evidence="1">UDP-N-acetylglucosamine pyrophosphorylase</fullName>
            <ecNumber evidence="1">2.7.7.23</ecNumber>
        </recommendedName>
        <alternativeName>
            <fullName evidence="1">N-acetylglucosamine-1-phosphate uridyltransferase</fullName>
        </alternativeName>
    </domain>
    <domain>
        <recommendedName>
            <fullName evidence="1">Glucosamine-1-phosphate N-acetyltransferase</fullName>
            <ecNumber evidence="1">2.3.1.157</ecNumber>
        </recommendedName>
    </domain>
</protein>